<proteinExistence type="evidence at protein level"/>
<reference key="1">
    <citation type="journal article" date="1998" name="Nature">
        <title>Deciphering the biology of Mycobacterium tuberculosis from the complete genome sequence.</title>
        <authorList>
            <person name="Cole S.T."/>
            <person name="Brosch R."/>
            <person name="Parkhill J."/>
            <person name="Garnier T."/>
            <person name="Churcher C.M."/>
            <person name="Harris D.E."/>
            <person name="Gordon S.V."/>
            <person name="Eiglmeier K."/>
            <person name="Gas S."/>
            <person name="Barry C.E. III"/>
            <person name="Tekaia F."/>
            <person name="Badcock K."/>
            <person name="Basham D."/>
            <person name="Brown D."/>
            <person name="Chillingworth T."/>
            <person name="Connor R."/>
            <person name="Davies R.M."/>
            <person name="Devlin K."/>
            <person name="Feltwell T."/>
            <person name="Gentles S."/>
            <person name="Hamlin N."/>
            <person name="Holroyd S."/>
            <person name="Hornsby T."/>
            <person name="Jagels K."/>
            <person name="Krogh A."/>
            <person name="McLean J."/>
            <person name="Moule S."/>
            <person name="Murphy L.D."/>
            <person name="Oliver S."/>
            <person name="Osborne J."/>
            <person name="Quail M.A."/>
            <person name="Rajandream M.A."/>
            <person name="Rogers J."/>
            <person name="Rutter S."/>
            <person name="Seeger K."/>
            <person name="Skelton S."/>
            <person name="Squares S."/>
            <person name="Squares R."/>
            <person name="Sulston J.E."/>
            <person name="Taylor K."/>
            <person name="Whitehead S."/>
            <person name="Barrell B.G."/>
        </authorList>
    </citation>
    <scope>NUCLEOTIDE SEQUENCE [LARGE SCALE GENOMIC DNA]</scope>
    <source>
        <strain>ATCC 25618 / H37Rv</strain>
    </source>
</reference>
<reference key="2">
    <citation type="journal article" date="2008" name="BMC Syst. Biol.">
        <title>targetTB: a target identification pipeline for Mycobacterium tuberculosis through an interactome, reactome and genome-scale structural analysis.</title>
        <authorList>
            <person name="Raman K."/>
            <person name="Yeturu K."/>
            <person name="Chandra N."/>
        </authorList>
    </citation>
    <scope>IDENTIFICATION AS A DRUG TARGET [LARGE SCALE ANALYSIS]</scope>
</reference>
<reference key="3">
    <citation type="journal article" date="2011" name="Mol. Cell. Proteomics">
        <title>Proteogenomic analysis of Mycobacterium tuberculosis by high resolution mass spectrometry.</title>
        <authorList>
            <person name="Kelkar D.S."/>
            <person name="Kumar D."/>
            <person name="Kumar P."/>
            <person name="Balakrishnan L."/>
            <person name="Muthusamy B."/>
            <person name="Yadav A.K."/>
            <person name="Shrivastava P."/>
            <person name="Marimuthu A."/>
            <person name="Anand S."/>
            <person name="Sundaram H."/>
            <person name="Kingsbury R."/>
            <person name="Harsha H.C."/>
            <person name="Nair B."/>
            <person name="Prasad T.S."/>
            <person name="Chauhan D.S."/>
            <person name="Katoch K."/>
            <person name="Katoch V.M."/>
            <person name="Kumar P."/>
            <person name="Chaerkady R."/>
            <person name="Ramachandran S."/>
            <person name="Dash D."/>
            <person name="Pandey A."/>
        </authorList>
    </citation>
    <scope>IDENTIFICATION BY MASS SPECTROMETRY [LARGE SCALE ANALYSIS]</scope>
    <source>
        <strain>ATCC 25618 / H37Rv</strain>
    </source>
</reference>
<dbReference type="EMBL" id="AL123456">
    <property type="protein sequence ID" value="CCP43985.1"/>
    <property type="status" value="ALT_INIT"/>
    <property type="molecule type" value="Genomic_DNA"/>
</dbReference>
<dbReference type="PIR" id="H70508">
    <property type="entry name" value="H70508"/>
</dbReference>
<dbReference type="RefSeq" id="NP_215745.1">
    <property type="nucleotide sequence ID" value="NC_000962.3"/>
</dbReference>
<dbReference type="SMR" id="P9WJN7"/>
<dbReference type="FunCoup" id="P9WJN7">
    <property type="interactions" value="422"/>
</dbReference>
<dbReference type="STRING" id="83332.Rv1229c"/>
<dbReference type="PaxDb" id="83332-Rv1229c"/>
<dbReference type="DNASU" id="886067"/>
<dbReference type="GeneID" id="886067"/>
<dbReference type="KEGG" id="mtu:Rv1229c"/>
<dbReference type="PATRIC" id="fig|83332.12.peg.1378"/>
<dbReference type="TubercuList" id="Rv1229c"/>
<dbReference type="eggNOG" id="COG0489">
    <property type="taxonomic scope" value="Bacteria"/>
</dbReference>
<dbReference type="eggNOG" id="COG2151">
    <property type="taxonomic scope" value="Bacteria"/>
</dbReference>
<dbReference type="InParanoid" id="P9WJN7"/>
<dbReference type="OrthoDB" id="9809679at2"/>
<dbReference type="Proteomes" id="UP000001584">
    <property type="component" value="Chromosome"/>
</dbReference>
<dbReference type="GO" id="GO:0051539">
    <property type="term" value="F:4 iron, 4 sulfur cluster binding"/>
    <property type="evidence" value="ECO:0000318"/>
    <property type="project" value="GO_Central"/>
</dbReference>
<dbReference type="GO" id="GO:0005524">
    <property type="term" value="F:ATP binding"/>
    <property type="evidence" value="ECO:0007669"/>
    <property type="project" value="UniProtKB-UniRule"/>
</dbReference>
<dbReference type="GO" id="GO:0016887">
    <property type="term" value="F:ATP hydrolysis activity"/>
    <property type="evidence" value="ECO:0007669"/>
    <property type="project" value="UniProtKB-UniRule"/>
</dbReference>
<dbReference type="GO" id="GO:0140663">
    <property type="term" value="F:ATP-dependent FeS chaperone activity"/>
    <property type="evidence" value="ECO:0007669"/>
    <property type="project" value="InterPro"/>
</dbReference>
<dbReference type="GO" id="GO:0046872">
    <property type="term" value="F:metal ion binding"/>
    <property type="evidence" value="ECO:0007669"/>
    <property type="project" value="UniProtKB-KW"/>
</dbReference>
<dbReference type="GO" id="GO:0016226">
    <property type="term" value="P:iron-sulfur cluster assembly"/>
    <property type="evidence" value="ECO:0000318"/>
    <property type="project" value="GO_Central"/>
</dbReference>
<dbReference type="CDD" id="cd02037">
    <property type="entry name" value="Mrp_NBP35"/>
    <property type="match status" value="1"/>
</dbReference>
<dbReference type="FunFam" id="3.40.50.300:FF:000304">
    <property type="entry name" value="Iron-sulfur cluster carrier protein"/>
    <property type="match status" value="1"/>
</dbReference>
<dbReference type="Gene3D" id="3.30.300.130">
    <property type="entry name" value="Fe-S cluster assembly (FSCA)"/>
    <property type="match status" value="1"/>
</dbReference>
<dbReference type="Gene3D" id="3.40.50.300">
    <property type="entry name" value="P-loop containing nucleotide triphosphate hydrolases"/>
    <property type="match status" value="1"/>
</dbReference>
<dbReference type="HAMAP" id="MF_02040">
    <property type="entry name" value="Mrp_NBP35"/>
    <property type="match status" value="1"/>
</dbReference>
<dbReference type="InterPro" id="IPR034904">
    <property type="entry name" value="FSCA_dom_sf"/>
</dbReference>
<dbReference type="InterPro" id="IPR002744">
    <property type="entry name" value="MIP18-like"/>
</dbReference>
<dbReference type="InterPro" id="IPR000808">
    <property type="entry name" value="Mrp-like_CS"/>
</dbReference>
<dbReference type="InterPro" id="IPR019591">
    <property type="entry name" value="Mrp/NBP35_ATP-bd"/>
</dbReference>
<dbReference type="InterPro" id="IPR044304">
    <property type="entry name" value="NUBPL-like"/>
</dbReference>
<dbReference type="InterPro" id="IPR027417">
    <property type="entry name" value="P-loop_NTPase"/>
</dbReference>
<dbReference type="InterPro" id="IPR033756">
    <property type="entry name" value="YlxH/NBP35"/>
</dbReference>
<dbReference type="PANTHER" id="PTHR42961">
    <property type="entry name" value="IRON-SULFUR PROTEIN NUBPL"/>
    <property type="match status" value="1"/>
</dbReference>
<dbReference type="PANTHER" id="PTHR42961:SF2">
    <property type="entry name" value="IRON-SULFUR PROTEIN NUBPL"/>
    <property type="match status" value="1"/>
</dbReference>
<dbReference type="Pfam" id="PF01883">
    <property type="entry name" value="FeS_assembly_P"/>
    <property type="match status" value="1"/>
</dbReference>
<dbReference type="Pfam" id="PF10609">
    <property type="entry name" value="ParA"/>
    <property type="match status" value="1"/>
</dbReference>
<dbReference type="SUPFAM" id="SSF117916">
    <property type="entry name" value="Fe-S cluster assembly (FSCA) domain-like"/>
    <property type="match status" value="1"/>
</dbReference>
<dbReference type="SUPFAM" id="SSF52540">
    <property type="entry name" value="P-loop containing nucleoside triphosphate hydrolases"/>
    <property type="match status" value="1"/>
</dbReference>
<dbReference type="PROSITE" id="PS01215">
    <property type="entry name" value="MRP"/>
    <property type="match status" value="1"/>
</dbReference>
<organism>
    <name type="scientific">Mycobacterium tuberculosis (strain ATCC 25618 / H37Rv)</name>
    <dbReference type="NCBI Taxonomy" id="83332"/>
    <lineage>
        <taxon>Bacteria</taxon>
        <taxon>Bacillati</taxon>
        <taxon>Actinomycetota</taxon>
        <taxon>Actinomycetes</taxon>
        <taxon>Mycobacteriales</taxon>
        <taxon>Mycobacteriaceae</taxon>
        <taxon>Mycobacterium</taxon>
        <taxon>Mycobacterium tuberculosis complex</taxon>
    </lineage>
</organism>
<gene>
    <name type="primary">mrp</name>
    <name type="ordered locus">Rv1229c</name>
    <name type="ORF">MTCI61.12c</name>
    <name type="ORF">MTV006.01c</name>
</gene>
<feature type="chain" id="PRO_0000184938" description="Iron-sulfur cluster carrier protein">
    <location>
        <begin position="1"/>
        <end position="381"/>
    </location>
</feature>
<feature type="binding site" evidence="1">
    <location>
        <begin position="125"/>
        <end position="132"/>
    </location>
    <ligand>
        <name>ATP</name>
        <dbReference type="ChEBI" id="CHEBI:30616"/>
    </ligand>
</feature>
<evidence type="ECO:0000255" key="1">
    <source>
        <dbReference type="HAMAP-Rule" id="MF_02040"/>
    </source>
</evidence>
<evidence type="ECO:0000305" key="2"/>
<name>APBC_MYCTU</name>
<keyword id="KW-0067">ATP-binding</keyword>
<keyword id="KW-0378">Hydrolase</keyword>
<keyword id="KW-0408">Iron</keyword>
<keyword id="KW-0411">Iron-sulfur</keyword>
<keyword id="KW-0479">Metal-binding</keyword>
<keyword id="KW-0547">Nucleotide-binding</keyword>
<keyword id="KW-1185">Reference proteome</keyword>
<accession>P9WJN7</accession>
<accession>L0T7N6</accession>
<accession>O33225</accession>
<accession>P65441</accession>
<comment type="function">
    <text evidence="1">Binds and transfers iron-sulfur (Fe-S) clusters to target apoproteins. Can hydrolyze ATP.</text>
</comment>
<comment type="subunit">
    <text evidence="1">Homodimer.</text>
</comment>
<comment type="miscellaneous">
    <text>Was identified as a high-confidence drug target.</text>
</comment>
<comment type="similarity">
    <text evidence="2">In the N-terminal section; belongs to the MIP18 family.</text>
</comment>
<comment type="similarity">
    <text evidence="2">In the C-terminal section; belongs to the Mrp/NBP35 ATP-binding proteins family.</text>
</comment>
<comment type="sequence caution" evidence="2">
    <conflict type="erroneous initiation">
        <sequence resource="EMBL-CDS" id="CCP43985"/>
    </conflict>
    <text>Extended N-terminus.</text>
</comment>
<protein>
    <recommendedName>
        <fullName evidence="1">Iron-sulfur cluster carrier protein</fullName>
    </recommendedName>
</protein>
<sequence>MSGTRDGDLNAAIRTALGKVIDPELRRPITELGMVKSIDTGPDGSVHVEIYLTIAGCPKKSEITERVTRAVADVPGTSAVRVSLDVMSDEQRTELRKQLRGDTREPVIPFAQPDSLTRVYAVASGKGGVGKSTVTVNLAAAMAVRGLSIGVLDADIHGHSIPRMMGTTDRPTQVESMILPPIAHQVKVISIAQFTQGNTPVVWRGPMLHRALQQFLADVYWGDLDVLLLDLPPGTGDVAISVAQLIPNAELLVVTTPQLAAAEVAERAGSIALQTRQRIVGVVENMSGLTLPDGTTMQVFGEGGGRLVAERLSRAVGADVPLLGQIPLDPALVAAGDSGVPLVLSSPDSAIGKELHSIADGLSTRRRGLAGMSLGLDPTRR</sequence>